<gene>
    <name type="primary">sif2</name>
    <name type="ORF">SPCC16C4.01</name>
    <name type="ORF">SPCC5E4.09</name>
</gene>
<name>SIF2_SCHPO</name>
<proteinExistence type="evidence at protein level"/>
<protein>
    <recommendedName>
        <fullName>Sad1-interacting factor 2</fullName>
    </recommendedName>
    <alternativeName>
        <fullName>Sporulation protein sif2</fullName>
    </alternativeName>
</protein>
<keyword id="KW-0469">Meiosis</keyword>
<keyword id="KW-0472">Membrane</keyword>
<keyword id="KW-0539">Nucleus</keyword>
<keyword id="KW-0597">Phosphoprotein</keyword>
<keyword id="KW-1185">Reference proteome</keyword>
<keyword id="KW-0749">Sporulation</keyword>
<keyword id="KW-0812">Transmembrane</keyword>
<keyword id="KW-1133">Transmembrane helix</keyword>
<sequence>MSNRIGPQRSTKTAAKLRLLPSTEEFDDFRRQDTGREVYSQIPQIEGSTAKRDAEHLGKRHREFLPRVTAYCTCDTFRVDLLFKFFQSRRSSHKTRPKQFDECIYSPYSYNNEETTDLLPDTLESSRGTLNRESSQESLQSIFEESGLDRNQPLFREVFCFTYGVVVLWGYTIDEEHRFLRELGRFEIEKLKIEDMEVEEFNYYITTLYQPRIFNDFIALRDASNYMIRLSISHAIAQSVKISLFEELVNETIDATKDTPQMIAETGRVNLKREEIMMAVGQLFILRININLQGSVLDSPELMWTEPQLEPIYTAARSYLEINQRVALLNQRVEVIGDLLSMLKEQITHTHDESLEWIVVILMGLLVLIALFSIVVDWKLFQ</sequence>
<reference key="1">
    <citation type="journal article" date="2002" name="Nature">
        <title>The genome sequence of Schizosaccharomyces pombe.</title>
        <authorList>
            <person name="Wood V."/>
            <person name="Gwilliam R."/>
            <person name="Rajandream M.A."/>
            <person name="Lyne M.H."/>
            <person name="Lyne R."/>
            <person name="Stewart A."/>
            <person name="Sgouros J.G."/>
            <person name="Peat N."/>
            <person name="Hayles J."/>
            <person name="Baker S.G."/>
            <person name="Basham D."/>
            <person name="Bowman S."/>
            <person name="Brooks K."/>
            <person name="Brown D."/>
            <person name="Brown S."/>
            <person name="Chillingworth T."/>
            <person name="Churcher C.M."/>
            <person name="Collins M."/>
            <person name="Connor R."/>
            <person name="Cronin A."/>
            <person name="Davis P."/>
            <person name="Feltwell T."/>
            <person name="Fraser A."/>
            <person name="Gentles S."/>
            <person name="Goble A."/>
            <person name="Hamlin N."/>
            <person name="Harris D.E."/>
            <person name="Hidalgo J."/>
            <person name="Hodgson G."/>
            <person name="Holroyd S."/>
            <person name="Hornsby T."/>
            <person name="Howarth S."/>
            <person name="Huckle E.J."/>
            <person name="Hunt S."/>
            <person name="Jagels K."/>
            <person name="James K.D."/>
            <person name="Jones L."/>
            <person name="Jones M."/>
            <person name="Leather S."/>
            <person name="McDonald S."/>
            <person name="McLean J."/>
            <person name="Mooney P."/>
            <person name="Moule S."/>
            <person name="Mungall K.L."/>
            <person name="Murphy L.D."/>
            <person name="Niblett D."/>
            <person name="Odell C."/>
            <person name="Oliver K."/>
            <person name="O'Neil S."/>
            <person name="Pearson D."/>
            <person name="Quail M.A."/>
            <person name="Rabbinowitsch E."/>
            <person name="Rutherford K.M."/>
            <person name="Rutter S."/>
            <person name="Saunders D."/>
            <person name="Seeger K."/>
            <person name="Sharp S."/>
            <person name="Skelton J."/>
            <person name="Simmonds M.N."/>
            <person name="Squares R."/>
            <person name="Squares S."/>
            <person name="Stevens K."/>
            <person name="Taylor K."/>
            <person name="Taylor R.G."/>
            <person name="Tivey A."/>
            <person name="Walsh S.V."/>
            <person name="Warren T."/>
            <person name="Whitehead S."/>
            <person name="Woodward J.R."/>
            <person name="Volckaert G."/>
            <person name="Aert R."/>
            <person name="Robben J."/>
            <person name="Grymonprez B."/>
            <person name="Weltjens I."/>
            <person name="Vanstreels E."/>
            <person name="Rieger M."/>
            <person name="Schaefer M."/>
            <person name="Mueller-Auer S."/>
            <person name="Gabel C."/>
            <person name="Fuchs M."/>
            <person name="Duesterhoeft A."/>
            <person name="Fritzc C."/>
            <person name="Holzer E."/>
            <person name="Moestl D."/>
            <person name="Hilbert H."/>
            <person name="Borzym K."/>
            <person name="Langer I."/>
            <person name="Beck A."/>
            <person name="Lehrach H."/>
            <person name="Reinhardt R."/>
            <person name="Pohl T.M."/>
            <person name="Eger P."/>
            <person name="Zimmermann W."/>
            <person name="Wedler H."/>
            <person name="Wambutt R."/>
            <person name="Purnelle B."/>
            <person name="Goffeau A."/>
            <person name="Cadieu E."/>
            <person name="Dreano S."/>
            <person name="Gloux S."/>
            <person name="Lelaure V."/>
            <person name="Mottier S."/>
            <person name="Galibert F."/>
            <person name="Aves S.J."/>
            <person name="Xiang Z."/>
            <person name="Hunt C."/>
            <person name="Moore K."/>
            <person name="Hurst S.M."/>
            <person name="Lucas M."/>
            <person name="Rochet M."/>
            <person name="Gaillardin C."/>
            <person name="Tallada V.A."/>
            <person name="Garzon A."/>
            <person name="Thode G."/>
            <person name="Daga R.R."/>
            <person name="Cruzado L."/>
            <person name="Jimenez J."/>
            <person name="Sanchez M."/>
            <person name="del Rey F."/>
            <person name="Benito J."/>
            <person name="Dominguez A."/>
            <person name="Revuelta J.L."/>
            <person name="Moreno S."/>
            <person name="Armstrong J."/>
            <person name="Forsburg S.L."/>
            <person name="Cerutti L."/>
            <person name="Lowe T."/>
            <person name="McCombie W.R."/>
            <person name="Paulsen I."/>
            <person name="Potashkin J."/>
            <person name="Shpakovski G.V."/>
            <person name="Ussery D."/>
            <person name="Barrell B.G."/>
            <person name="Nurse P."/>
        </authorList>
    </citation>
    <scope>NUCLEOTIDE SEQUENCE [LARGE SCALE GENOMIC DNA]</scope>
    <source>
        <strain>972 / ATCC 24843</strain>
    </source>
</reference>
<reference key="2">
    <citation type="journal article" date="2004" name="Mol. Genet. Genomics">
        <title>Two-hybrid search for proteins that interact with Sad1 and Kms1, two membrane-bound components of the spindle pole body in fission yeast.</title>
        <authorList>
            <person name="Miki F."/>
            <person name="Kurabayashi A."/>
            <person name="Tange Y."/>
            <person name="Okazaki K."/>
            <person name="Shimanuki M."/>
            <person name="Niwa O."/>
        </authorList>
    </citation>
    <scope>INTERACTION WITH SAD1</scope>
    <scope>SUBCELLULAR LOCATION</scope>
</reference>
<reference key="3">
    <citation type="journal article" date="2008" name="J. Proteome Res.">
        <title>Phosphoproteome analysis of fission yeast.</title>
        <authorList>
            <person name="Wilson-Grady J.T."/>
            <person name="Villen J."/>
            <person name="Gygi S.P."/>
        </authorList>
    </citation>
    <scope>PHOSPHORYLATION [LARGE SCALE ANALYSIS] AT SER-135</scope>
    <scope>IDENTIFICATION BY MASS SPECTROMETRY</scope>
</reference>
<accession>O74446</accession>
<accession>Q1MTQ4</accession>
<comment type="function">
    <text evidence="1">Required for sporulation where it is believed to have a role in meiotic nuclear division.</text>
</comment>
<comment type="subunit">
    <text evidence="3">Interacts with sad1.</text>
</comment>
<comment type="subcellular location">
    <subcellularLocation>
        <location evidence="5">Nucleus membrane</location>
        <topology evidence="5">Single-pass membrane protein</topology>
    </subcellularLocation>
    <text evidence="3">Localized primarily along the nuclear envelope in a punctate pattern.</text>
</comment>
<comment type="similarity">
    <text evidence="5">Belongs to the RMD1/sif2 family.</text>
</comment>
<organism>
    <name type="scientific">Schizosaccharomyces pombe (strain 972 / ATCC 24843)</name>
    <name type="common">Fission yeast</name>
    <dbReference type="NCBI Taxonomy" id="284812"/>
    <lineage>
        <taxon>Eukaryota</taxon>
        <taxon>Fungi</taxon>
        <taxon>Dikarya</taxon>
        <taxon>Ascomycota</taxon>
        <taxon>Taphrinomycotina</taxon>
        <taxon>Schizosaccharomycetes</taxon>
        <taxon>Schizosaccharomycetales</taxon>
        <taxon>Schizosaccharomycetaceae</taxon>
        <taxon>Schizosaccharomyces</taxon>
    </lineage>
</organism>
<evidence type="ECO:0000250" key="1"/>
<evidence type="ECO:0000255" key="2"/>
<evidence type="ECO:0000269" key="3">
    <source>
    </source>
</evidence>
<evidence type="ECO:0000269" key="4">
    <source>
    </source>
</evidence>
<evidence type="ECO:0000305" key="5"/>
<feature type="chain" id="PRO_0000097758" description="Sad1-interacting factor 2">
    <location>
        <begin position="1"/>
        <end position="382"/>
    </location>
</feature>
<feature type="transmembrane region" description="Helical" evidence="2">
    <location>
        <begin position="356"/>
        <end position="376"/>
    </location>
</feature>
<feature type="modified residue" description="Phosphoserine" evidence="4">
    <location>
        <position position="135"/>
    </location>
</feature>
<dbReference type="EMBL" id="CU329672">
    <property type="protein sequence ID" value="CAA21964.3"/>
    <property type="molecule type" value="Genomic_DNA"/>
</dbReference>
<dbReference type="PIR" id="T41091">
    <property type="entry name" value="T41091"/>
</dbReference>
<dbReference type="PIR" id="T41460">
    <property type="entry name" value="T41460"/>
</dbReference>
<dbReference type="RefSeq" id="NP_587910.3">
    <property type="nucleotide sequence ID" value="NM_001022901.3"/>
</dbReference>
<dbReference type="SMR" id="O74446"/>
<dbReference type="BioGRID" id="275746">
    <property type="interactions" value="30"/>
</dbReference>
<dbReference type="FunCoup" id="O74446">
    <property type="interactions" value="16"/>
</dbReference>
<dbReference type="IntAct" id="O74446">
    <property type="interactions" value="1"/>
</dbReference>
<dbReference type="STRING" id="284812.O74446"/>
<dbReference type="iPTMnet" id="O74446"/>
<dbReference type="PaxDb" id="4896-SPCC16C4.01.1"/>
<dbReference type="EnsemblFungi" id="SPCC16C4.01.1">
    <property type="protein sequence ID" value="SPCC16C4.01.1:pep"/>
    <property type="gene ID" value="SPCC16C4.01"/>
</dbReference>
<dbReference type="GeneID" id="2539175"/>
<dbReference type="KEGG" id="spo:2539175"/>
<dbReference type="PomBase" id="SPCC16C4.01">
    <property type="gene designation" value="sif2"/>
</dbReference>
<dbReference type="VEuPathDB" id="FungiDB:SPCC16C4.01"/>
<dbReference type="eggNOG" id="KOG2861">
    <property type="taxonomic scope" value="Eukaryota"/>
</dbReference>
<dbReference type="HOGENOM" id="CLU_011220_1_1_1"/>
<dbReference type="InParanoid" id="O74446"/>
<dbReference type="OMA" id="HHTHPKL"/>
<dbReference type="PhylomeDB" id="O74446"/>
<dbReference type="PRO" id="PR:O74446"/>
<dbReference type="Proteomes" id="UP000002485">
    <property type="component" value="Chromosome III"/>
</dbReference>
<dbReference type="GO" id="GO:0005759">
    <property type="term" value="C:mitochondrial matrix"/>
    <property type="evidence" value="ECO:0000305"/>
    <property type="project" value="PomBase"/>
</dbReference>
<dbReference type="GO" id="GO:0031965">
    <property type="term" value="C:nuclear membrane"/>
    <property type="evidence" value="ECO:0007669"/>
    <property type="project" value="UniProtKB-SubCell"/>
</dbReference>
<dbReference type="GO" id="GO:0051321">
    <property type="term" value="P:meiotic cell cycle"/>
    <property type="evidence" value="ECO:0007669"/>
    <property type="project" value="UniProtKB-KW"/>
</dbReference>
<dbReference type="GO" id="GO:0140053">
    <property type="term" value="P:mitochondrial gene expression"/>
    <property type="evidence" value="ECO:0000266"/>
    <property type="project" value="PomBase"/>
</dbReference>
<dbReference type="GO" id="GO:0030435">
    <property type="term" value="P:sporulation resulting in formation of a cellular spore"/>
    <property type="evidence" value="ECO:0007669"/>
    <property type="project" value="UniProtKB-KW"/>
</dbReference>
<dbReference type="InterPro" id="IPR036915">
    <property type="entry name" value="Cyclin-like_sf"/>
</dbReference>
<dbReference type="InterPro" id="IPR003734">
    <property type="entry name" value="DUF155"/>
</dbReference>
<dbReference type="InterPro" id="IPR051624">
    <property type="entry name" value="RMD1/Sad1-interacting"/>
</dbReference>
<dbReference type="PANTHER" id="PTHR16255">
    <property type="entry name" value="REQUIRED FOR MEIOTIC NUCLEAR DIVISION PROTEIN 1 HOMOLOG"/>
    <property type="match status" value="1"/>
</dbReference>
<dbReference type="PANTHER" id="PTHR16255:SF15">
    <property type="entry name" value="SPORULATION PROTEIN RMD1"/>
    <property type="match status" value="1"/>
</dbReference>
<dbReference type="Pfam" id="PF02582">
    <property type="entry name" value="DUF155"/>
    <property type="match status" value="1"/>
</dbReference>
<dbReference type="SUPFAM" id="SSF47954">
    <property type="entry name" value="Cyclin-like"/>
    <property type="match status" value="1"/>
</dbReference>